<keyword id="KW-0997">Cell inner membrane</keyword>
<keyword id="KW-1003">Cell membrane</keyword>
<keyword id="KW-0472">Membrane</keyword>
<keyword id="KW-0812">Transmembrane</keyword>
<keyword id="KW-1133">Transmembrane helix</keyword>
<keyword id="KW-0813">Transport</keyword>
<dbReference type="EMBL" id="AE017197">
    <property type="protein sequence ID" value="AAU04056.1"/>
    <property type="molecule type" value="Genomic_DNA"/>
</dbReference>
<dbReference type="RefSeq" id="WP_011191037.1">
    <property type="nucleotide sequence ID" value="NC_006142.1"/>
</dbReference>
<dbReference type="SMR" id="Q68WD6"/>
<dbReference type="KEGG" id="rty:RT0591"/>
<dbReference type="eggNOG" id="COG2814">
    <property type="taxonomic scope" value="Bacteria"/>
</dbReference>
<dbReference type="HOGENOM" id="CLU_001265_47_1_5"/>
<dbReference type="OrthoDB" id="9800416at2"/>
<dbReference type="Proteomes" id="UP000000604">
    <property type="component" value="Chromosome"/>
</dbReference>
<dbReference type="GO" id="GO:0005886">
    <property type="term" value="C:plasma membrane"/>
    <property type="evidence" value="ECO:0007669"/>
    <property type="project" value="UniProtKB-SubCell"/>
</dbReference>
<dbReference type="GO" id="GO:0042910">
    <property type="term" value="F:xenobiotic transmembrane transporter activity"/>
    <property type="evidence" value="ECO:0007669"/>
    <property type="project" value="InterPro"/>
</dbReference>
<dbReference type="GO" id="GO:1990961">
    <property type="term" value="P:xenobiotic detoxification by transmembrane export across the plasma membrane"/>
    <property type="evidence" value="ECO:0007669"/>
    <property type="project" value="InterPro"/>
</dbReference>
<dbReference type="CDD" id="cd17320">
    <property type="entry name" value="MFS_MdfA_MDR_like"/>
    <property type="match status" value="1"/>
</dbReference>
<dbReference type="Gene3D" id="1.20.1720.10">
    <property type="entry name" value="Multidrug resistance protein D"/>
    <property type="match status" value="1"/>
</dbReference>
<dbReference type="InterPro" id="IPR004812">
    <property type="entry name" value="Efflux_drug-R_Bcr/CmlA"/>
</dbReference>
<dbReference type="InterPro" id="IPR011701">
    <property type="entry name" value="MFS"/>
</dbReference>
<dbReference type="InterPro" id="IPR020846">
    <property type="entry name" value="MFS_dom"/>
</dbReference>
<dbReference type="InterPro" id="IPR036259">
    <property type="entry name" value="MFS_trans_sf"/>
</dbReference>
<dbReference type="InterPro" id="IPR005829">
    <property type="entry name" value="Sugar_transporter_CS"/>
</dbReference>
<dbReference type="NCBIfam" id="TIGR00710">
    <property type="entry name" value="efflux_Bcr_CflA"/>
    <property type="match status" value="1"/>
</dbReference>
<dbReference type="PANTHER" id="PTHR23502">
    <property type="entry name" value="MAJOR FACILITATOR SUPERFAMILY"/>
    <property type="match status" value="1"/>
</dbReference>
<dbReference type="PANTHER" id="PTHR23502:SF137">
    <property type="entry name" value="MAJOR FACILITATOR SUPERFAMILY (MFS) TRANSPORTER-RELATED"/>
    <property type="match status" value="1"/>
</dbReference>
<dbReference type="Pfam" id="PF07690">
    <property type="entry name" value="MFS_1"/>
    <property type="match status" value="1"/>
</dbReference>
<dbReference type="SUPFAM" id="SSF103473">
    <property type="entry name" value="MFS general substrate transporter"/>
    <property type="match status" value="1"/>
</dbReference>
<dbReference type="PROSITE" id="PS50850">
    <property type="entry name" value="MFS"/>
    <property type="match status" value="1"/>
</dbReference>
<dbReference type="PROSITE" id="PS00216">
    <property type="entry name" value="SUGAR_TRANSPORT_1"/>
    <property type="match status" value="1"/>
</dbReference>
<sequence>MKIIVKIPVWMLLSLFILSPTTETIYTSGLPSLTKYFSIDGCITQITSTLYFLGFAVGILSLGRLSDIYGRRPIVLLGLFIYIVSSIISIFSVNIEMLMIARFIQAFGVSVGSVIGQSMARDSYQGAELSYVYAILSPWLLFIPSLGSYIGGYIIEYSSWHYVFVFFSLIGTILLALYYKILPETNYYIDFSQSSKYFEVFNIIIKDKILWLYAFIIGAFNGIYYGFFIEAPFILIDKMKVLPSFYGKLAFLLSFSAIFGGFLGGYLIKKRQVHDKKVMSIGFIFSLCGCILFVVNAFILEFILVSNGLAISMIFVPMMIHIIGHSLLIPITLRYALEDYAKVTGTAGSIFGAIYYIVIAAVTYCVSKIHGETISNFSLLCLVSSISSVISFYYICILYKKKSIVANEK</sequence>
<gene>
    <name type="ordered locus">RT0591</name>
</gene>
<feature type="chain" id="PRO_0000281084" description="Uncharacterized transporter RT0591">
    <location>
        <begin position="1"/>
        <end position="409"/>
    </location>
</feature>
<feature type="transmembrane region" description="Helical" evidence="1">
    <location>
        <begin position="3"/>
        <end position="23"/>
    </location>
</feature>
<feature type="transmembrane region" description="Helical" evidence="1">
    <location>
        <begin position="43"/>
        <end position="63"/>
    </location>
</feature>
<feature type="transmembrane region" description="Helical" evidence="1">
    <location>
        <begin position="73"/>
        <end position="93"/>
    </location>
</feature>
<feature type="transmembrane region" description="Helical" evidence="1">
    <location>
        <begin position="95"/>
        <end position="115"/>
    </location>
</feature>
<feature type="transmembrane region" description="Helical" evidence="1">
    <location>
        <begin position="135"/>
        <end position="155"/>
    </location>
</feature>
<feature type="transmembrane region" description="Helical" evidence="1">
    <location>
        <begin position="162"/>
        <end position="182"/>
    </location>
</feature>
<feature type="transmembrane region" description="Helical" evidence="1">
    <location>
        <begin position="209"/>
        <end position="229"/>
    </location>
</feature>
<feature type="transmembrane region" description="Helical" evidence="1">
    <location>
        <begin position="248"/>
        <end position="268"/>
    </location>
</feature>
<feature type="transmembrane region" description="Helical" evidence="1">
    <location>
        <begin position="283"/>
        <end position="303"/>
    </location>
</feature>
<feature type="transmembrane region" description="Helical" evidence="1">
    <location>
        <begin position="309"/>
        <end position="329"/>
    </location>
</feature>
<feature type="transmembrane region" description="Helical" evidence="1">
    <location>
        <begin position="346"/>
        <end position="366"/>
    </location>
</feature>
<feature type="transmembrane region" description="Helical" evidence="1">
    <location>
        <begin position="379"/>
        <end position="399"/>
    </location>
</feature>
<organism>
    <name type="scientific">Rickettsia typhi (strain ATCC VR-144 / Wilmington)</name>
    <dbReference type="NCBI Taxonomy" id="257363"/>
    <lineage>
        <taxon>Bacteria</taxon>
        <taxon>Pseudomonadati</taxon>
        <taxon>Pseudomonadota</taxon>
        <taxon>Alphaproteobacteria</taxon>
        <taxon>Rickettsiales</taxon>
        <taxon>Rickettsiaceae</taxon>
        <taxon>Rickettsieae</taxon>
        <taxon>Rickettsia</taxon>
        <taxon>typhus group</taxon>
    </lineage>
</organism>
<reference key="1">
    <citation type="journal article" date="2004" name="J. Bacteriol.">
        <title>Complete genome sequence of Rickettsia typhi and comparison with sequences of other Rickettsiae.</title>
        <authorList>
            <person name="McLeod M.P."/>
            <person name="Qin X."/>
            <person name="Karpathy S.E."/>
            <person name="Gioia J."/>
            <person name="Highlander S.K."/>
            <person name="Fox G.E."/>
            <person name="McNeill T.Z."/>
            <person name="Jiang H."/>
            <person name="Muzny D."/>
            <person name="Jacob L.S."/>
            <person name="Hawes A.C."/>
            <person name="Sodergren E."/>
            <person name="Gill R."/>
            <person name="Hume J."/>
            <person name="Morgan M."/>
            <person name="Fan G."/>
            <person name="Amin A.G."/>
            <person name="Gibbs R.A."/>
            <person name="Hong C."/>
            <person name="Yu X.-J."/>
            <person name="Walker D.H."/>
            <person name="Weinstock G.M."/>
        </authorList>
    </citation>
    <scope>NUCLEOTIDE SEQUENCE [LARGE SCALE GENOMIC DNA]</scope>
    <source>
        <strain>ATCC VR-144 / Wilmington</strain>
    </source>
</reference>
<protein>
    <recommendedName>
        <fullName>Uncharacterized transporter RT0591</fullName>
    </recommendedName>
</protein>
<evidence type="ECO:0000255" key="1"/>
<evidence type="ECO:0000305" key="2"/>
<proteinExistence type="inferred from homology"/>
<name>BCRH_RICTY</name>
<comment type="subcellular location">
    <subcellularLocation>
        <location evidence="2">Cell inner membrane</location>
        <topology evidence="2">Multi-pass membrane protein</topology>
    </subcellularLocation>
</comment>
<comment type="similarity">
    <text evidence="2">Belongs to the major facilitator superfamily. Bcr/CmlA family.</text>
</comment>
<accession>Q68WD6</accession>